<organism>
    <name type="scientific">Oryza sativa subsp. indica</name>
    <name type="common">Rice</name>
    <dbReference type="NCBI Taxonomy" id="39946"/>
    <lineage>
        <taxon>Eukaryota</taxon>
        <taxon>Viridiplantae</taxon>
        <taxon>Streptophyta</taxon>
        <taxon>Embryophyta</taxon>
        <taxon>Tracheophyta</taxon>
        <taxon>Spermatophyta</taxon>
        <taxon>Magnoliopsida</taxon>
        <taxon>Liliopsida</taxon>
        <taxon>Poales</taxon>
        <taxon>Poaceae</taxon>
        <taxon>BOP clade</taxon>
        <taxon>Oryzoideae</taxon>
        <taxon>Oryzeae</taxon>
        <taxon>Oryzinae</taxon>
        <taxon>Oryza</taxon>
        <taxon>Oryza sativa</taxon>
    </lineage>
</organism>
<sequence length="185" mass="21595">MNWRSEHIWIELLKGSRKRGNFFWACILFLGSLGFLAVGASSYLGKNIISVLPSQQILFFPQGVVMSFYGIAGLFISAYLWCTILWNVGSGYDRFDRKEGVVCIFRWGFPGIKRRVFLRFLMRDIQSIRIQVKEGLFPRRILYMEIRGQGAIPLTRTDEKFFTPREIEQKAAELAYFLRIPMEVF</sequence>
<keyword id="KW-0150">Chloroplast</keyword>
<keyword id="KW-0472">Membrane</keyword>
<keyword id="KW-0602">Photosynthesis</keyword>
<keyword id="KW-0934">Plastid</keyword>
<keyword id="KW-1185">Reference proteome</keyword>
<keyword id="KW-0793">Thylakoid</keyword>
<keyword id="KW-0812">Transmembrane</keyword>
<keyword id="KW-1133">Transmembrane helix</keyword>
<feature type="chain" id="PRO_0000290105" description="Photosystem I assembly protein Ycf4">
    <location>
        <begin position="1"/>
        <end position="185"/>
    </location>
</feature>
<feature type="transmembrane region" description="Helical" evidence="1">
    <location>
        <begin position="21"/>
        <end position="43"/>
    </location>
</feature>
<feature type="transmembrane region" description="Helical" evidence="1">
    <location>
        <begin position="63"/>
        <end position="85"/>
    </location>
</feature>
<geneLocation type="chloroplast"/>
<evidence type="ECO:0000255" key="1">
    <source>
        <dbReference type="HAMAP-Rule" id="MF_00437"/>
    </source>
</evidence>
<accession>P0C514</accession>
<accession>P12206</accession>
<accession>Q6QXT9</accession>
<accession>Q6QY66</accession>
<name>YCF4_ORYSI</name>
<comment type="function">
    <text evidence="1">Seems to be required for the assembly of the photosystem I complex.</text>
</comment>
<comment type="subcellular location">
    <subcellularLocation>
        <location evidence="1">Plastid</location>
        <location evidence="1">Chloroplast thylakoid membrane</location>
        <topology evidence="1">Multi-pass membrane protein</topology>
    </subcellularLocation>
</comment>
<comment type="similarity">
    <text evidence="1">Belongs to the Ycf4 family.</text>
</comment>
<proteinExistence type="inferred from homology"/>
<reference key="1">
    <citation type="journal article" date="2004" name="Plant Physiol.">
        <title>A comparison of rice chloroplast genomes.</title>
        <authorList>
            <person name="Tang J."/>
            <person name="Xia H."/>
            <person name="Cao M."/>
            <person name="Zhang X."/>
            <person name="Zeng W."/>
            <person name="Hu S."/>
            <person name="Tong W."/>
            <person name="Wang J."/>
            <person name="Wang J."/>
            <person name="Yu J."/>
            <person name="Yang H."/>
            <person name="Zhu L."/>
        </authorList>
    </citation>
    <scope>NUCLEOTIDE SEQUENCE [LARGE SCALE GENOMIC DNA]</scope>
    <source>
        <strain>cv. 93-11</strain>
    </source>
</reference>
<gene>
    <name evidence="1" type="primary">ycf4</name>
    <name type="ORF">9311068</name>
</gene>
<dbReference type="EMBL" id="AY522329">
    <property type="protein sequence ID" value="AAS46063.1"/>
    <property type="molecule type" value="Genomic_DNA"/>
</dbReference>
<dbReference type="RefSeq" id="YP_009161375.1">
    <property type="nucleotide sequence ID" value="NC_027678.1"/>
</dbReference>
<dbReference type="RefSeq" id="YP_654223.1">
    <property type="nucleotide sequence ID" value="NC_008155.1"/>
</dbReference>
<dbReference type="STRING" id="39946.P0C514"/>
<dbReference type="GeneID" id="4126872"/>
<dbReference type="HOGENOM" id="CLU_095465_0_0_1"/>
<dbReference type="Proteomes" id="UP000007015">
    <property type="component" value="Chloroplast"/>
</dbReference>
<dbReference type="GO" id="GO:0009535">
    <property type="term" value="C:chloroplast thylakoid membrane"/>
    <property type="evidence" value="ECO:0007669"/>
    <property type="project" value="UniProtKB-SubCell"/>
</dbReference>
<dbReference type="GO" id="GO:0009522">
    <property type="term" value="C:photosystem I"/>
    <property type="evidence" value="ECO:0007669"/>
    <property type="project" value="InterPro"/>
</dbReference>
<dbReference type="GO" id="GO:0009536">
    <property type="term" value="C:plastid"/>
    <property type="evidence" value="ECO:0000305"/>
    <property type="project" value="Gramene"/>
</dbReference>
<dbReference type="GO" id="GO:0015979">
    <property type="term" value="P:photosynthesis"/>
    <property type="evidence" value="ECO:0007669"/>
    <property type="project" value="UniProtKB-UniRule"/>
</dbReference>
<dbReference type="HAMAP" id="MF_00437">
    <property type="entry name" value="Ycf4"/>
    <property type="match status" value="1"/>
</dbReference>
<dbReference type="InterPro" id="IPR003359">
    <property type="entry name" value="PSI_Ycf4_assembly"/>
</dbReference>
<dbReference type="PANTHER" id="PTHR33288">
    <property type="match status" value="1"/>
</dbReference>
<dbReference type="PANTHER" id="PTHR33288:SF4">
    <property type="entry name" value="PHOTOSYSTEM I ASSEMBLY PROTEIN YCF4"/>
    <property type="match status" value="1"/>
</dbReference>
<dbReference type="Pfam" id="PF02392">
    <property type="entry name" value="Ycf4"/>
    <property type="match status" value="1"/>
</dbReference>
<protein>
    <recommendedName>
        <fullName evidence="1">Photosystem I assembly protein Ycf4</fullName>
    </recommendedName>
</protein>